<keyword id="KW-0328">Glycosyltransferase</keyword>
<keyword id="KW-0479">Metal-binding</keyword>
<keyword id="KW-0671">Queuosine biosynthesis</keyword>
<keyword id="KW-1185">Reference proteome</keyword>
<keyword id="KW-0808">Transferase</keyword>
<keyword id="KW-0819">tRNA processing</keyword>
<keyword id="KW-0862">Zinc</keyword>
<name>TGT_AROAE</name>
<dbReference type="EC" id="2.4.2.29" evidence="1"/>
<dbReference type="EMBL" id="CR555306">
    <property type="protein sequence ID" value="CAI06891.1"/>
    <property type="molecule type" value="Genomic_DNA"/>
</dbReference>
<dbReference type="RefSeq" id="WP_011236619.1">
    <property type="nucleotide sequence ID" value="NC_006513.1"/>
</dbReference>
<dbReference type="SMR" id="Q5P720"/>
<dbReference type="STRING" id="76114.ebA1415"/>
<dbReference type="KEGG" id="eba:ebA1415"/>
<dbReference type="eggNOG" id="COG0343">
    <property type="taxonomic scope" value="Bacteria"/>
</dbReference>
<dbReference type="HOGENOM" id="CLU_022060_0_1_4"/>
<dbReference type="OrthoDB" id="9805417at2"/>
<dbReference type="UniPathway" id="UPA00392"/>
<dbReference type="Proteomes" id="UP000006552">
    <property type="component" value="Chromosome"/>
</dbReference>
<dbReference type="GO" id="GO:0005829">
    <property type="term" value="C:cytosol"/>
    <property type="evidence" value="ECO:0007669"/>
    <property type="project" value="TreeGrafter"/>
</dbReference>
<dbReference type="GO" id="GO:0046872">
    <property type="term" value="F:metal ion binding"/>
    <property type="evidence" value="ECO:0007669"/>
    <property type="project" value="UniProtKB-KW"/>
</dbReference>
<dbReference type="GO" id="GO:0008479">
    <property type="term" value="F:tRNA-guanosine(34) queuine transglycosylase activity"/>
    <property type="evidence" value="ECO:0007669"/>
    <property type="project" value="UniProtKB-UniRule"/>
</dbReference>
<dbReference type="GO" id="GO:0008616">
    <property type="term" value="P:queuosine biosynthetic process"/>
    <property type="evidence" value="ECO:0007669"/>
    <property type="project" value="UniProtKB-UniRule"/>
</dbReference>
<dbReference type="GO" id="GO:0002099">
    <property type="term" value="P:tRNA wobble guanine modification"/>
    <property type="evidence" value="ECO:0007669"/>
    <property type="project" value="TreeGrafter"/>
</dbReference>
<dbReference type="GO" id="GO:0101030">
    <property type="term" value="P:tRNA-guanine transglycosylation"/>
    <property type="evidence" value="ECO:0007669"/>
    <property type="project" value="InterPro"/>
</dbReference>
<dbReference type="FunFam" id="3.20.20.105:FF:000001">
    <property type="entry name" value="Queuine tRNA-ribosyltransferase"/>
    <property type="match status" value="1"/>
</dbReference>
<dbReference type="Gene3D" id="3.20.20.105">
    <property type="entry name" value="Queuine tRNA-ribosyltransferase-like"/>
    <property type="match status" value="1"/>
</dbReference>
<dbReference type="HAMAP" id="MF_00168">
    <property type="entry name" value="Q_tRNA_Tgt"/>
    <property type="match status" value="1"/>
</dbReference>
<dbReference type="InterPro" id="IPR050076">
    <property type="entry name" value="ArchSynthase1/Queuine_TRR"/>
</dbReference>
<dbReference type="InterPro" id="IPR004803">
    <property type="entry name" value="TGT"/>
</dbReference>
<dbReference type="InterPro" id="IPR036511">
    <property type="entry name" value="TGT-like_sf"/>
</dbReference>
<dbReference type="InterPro" id="IPR002616">
    <property type="entry name" value="tRNA_ribo_trans-like"/>
</dbReference>
<dbReference type="NCBIfam" id="TIGR00430">
    <property type="entry name" value="Q_tRNA_tgt"/>
    <property type="match status" value="1"/>
</dbReference>
<dbReference type="NCBIfam" id="TIGR00449">
    <property type="entry name" value="tgt_general"/>
    <property type="match status" value="1"/>
</dbReference>
<dbReference type="PANTHER" id="PTHR46499">
    <property type="entry name" value="QUEUINE TRNA-RIBOSYLTRANSFERASE"/>
    <property type="match status" value="1"/>
</dbReference>
<dbReference type="PANTHER" id="PTHR46499:SF1">
    <property type="entry name" value="QUEUINE TRNA-RIBOSYLTRANSFERASE"/>
    <property type="match status" value="1"/>
</dbReference>
<dbReference type="Pfam" id="PF01702">
    <property type="entry name" value="TGT"/>
    <property type="match status" value="1"/>
</dbReference>
<dbReference type="SUPFAM" id="SSF51713">
    <property type="entry name" value="tRNA-guanine transglycosylase"/>
    <property type="match status" value="1"/>
</dbReference>
<comment type="function">
    <text evidence="1">Catalyzes the base-exchange of a guanine (G) residue with the queuine precursor 7-aminomethyl-7-deazaguanine (PreQ1) at position 34 (anticodon wobble position) in tRNAs with GU(N) anticodons (tRNA-Asp, -Asn, -His and -Tyr). Catalysis occurs through a double-displacement mechanism. The nucleophile active site attacks the C1' of nucleotide 34 to detach the guanine base from the RNA, forming a covalent enzyme-RNA intermediate. The proton acceptor active site deprotonates the incoming PreQ1, allowing a nucleophilic attack on the C1' of the ribose to form the product. After dissociation, two additional enzymatic reactions on the tRNA convert PreQ1 to queuine (Q), resulting in the hypermodified nucleoside queuosine (7-(((4,5-cis-dihydroxy-2-cyclopenten-1-yl)amino)methyl)-7-deazaguanosine).</text>
</comment>
<comment type="catalytic activity">
    <reaction evidence="1">
        <text>7-aminomethyl-7-carbaguanine + guanosine(34) in tRNA = 7-aminomethyl-7-carbaguanosine(34) in tRNA + guanine</text>
        <dbReference type="Rhea" id="RHEA:24104"/>
        <dbReference type="Rhea" id="RHEA-COMP:10341"/>
        <dbReference type="Rhea" id="RHEA-COMP:10342"/>
        <dbReference type="ChEBI" id="CHEBI:16235"/>
        <dbReference type="ChEBI" id="CHEBI:58703"/>
        <dbReference type="ChEBI" id="CHEBI:74269"/>
        <dbReference type="ChEBI" id="CHEBI:82833"/>
        <dbReference type="EC" id="2.4.2.29"/>
    </reaction>
</comment>
<comment type="cofactor">
    <cofactor evidence="1">
        <name>Zn(2+)</name>
        <dbReference type="ChEBI" id="CHEBI:29105"/>
    </cofactor>
    <text evidence="1">Binds 1 zinc ion per subunit.</text>
</comment>
<comment type="pathway">
    <text evidence="1">tRNA modification; tRNA-queuosine biosynthesis.</text>
</comment>
<comment type="subunit">
    <text evidence="1">Homodimer. Within each dimer, one monomer is responsible for RNA recognition and catalysis, while the other monomer binds to the replacement base PreQ1.</text>
</comment>
<comment type="similarity">
    <text evidence="1">Belongs to the queuine tRNA-ribosyltransferase family.</text>
</comment>
<sequence>MQFELLAQHGAARRGRLTLAHGTVDTPAFMPVGTYGTVKAMTPAALADTGAQICLGNTFHLWLRPGLDVVAAHGGLHRFMNWDRPILTDSGGFQVFSLGALRKISEEGVKFASPIDGAKLFLTPEESMRIQTVLNSDIAMIFDECTPHPATHDEAAKSMQLSLRWARRSRDEFDRLANPNALFGIVQGGMFEDLRDESLAALDAIGFSGYAIGGLSVGEPKEDMARILAHTAPRLPAGRPRYLMGVGTPEDIVAGVAAGIDMFDCVMPTRNARNGWLFTRYGDIKIKNATHKQDTRPLDPSCDCYTCRNFSRAYLHHLHRAGEILGSMLNTIHNLRYYQTLTAELRAAIAAGDLDSHAARFRADRSTGAC</sequence>
<protein>
    <recommendedName>
        <fullName evidence="1">Queuine tRNA-ribosyltransferase</fullName>
        <ecNumber evidence="1">2.4.2.29</ecNumber>
    </recommendedName>
    <alternativeName>
        <fullName evidence="1">Guanine insertion enzyme</fullName>
    </alternativeName>
    <alternativeName>
        <fullName evidence="1">tRNA-guanine transglycosylase</fullName>
    </alternativeName>
</protein>
<feature type="chain" id="PRO_0000135443" description="Queuine tRNA-ribosyltransferase">
    <location>
        <begin position="1"/>
        <end position="370"/>
    </location>
</feature>
<feature type="region of interest" description="RNA binding" evidence="1">
    <location>
        <begin position="245"/>
        <end position="251"/>
    </location>
</feature>
<feature type="region of interest" description="RNA binding; important for wobble base 34 recognition" evidence="1">
    <location>
        <begin position="269"/>
        <end position="273"/>
    </location>
</feature>
<feature type="active site" description="Proton acceptor" evidence="1">
    <location>
        <position position="89"/>
    </location>
</feature>
<feature type="active site" description="Nucleophile" evidence="1">
    <location>
        <position position="264"/>
    </location>
</feature>
<feature type="binding site" evidence="1">
    <location>
        <begin position="89"/>
        <end position="93"/>
    </location>
    <ligand>
        <name>substrate</name>
    </ligand>
</feature>
<feature type="binding site" evidence="1">
    <location>
        <position position="143"/>
    </location>
    <ligand>
        <name>substrate</name>
    </ligand>
</feature>
<feature type="binding site" evidence="1">
    <location>
        <position position="187"/>
    </location>
    <ligand>
        <name>substrate</name>
    </ligand>
</feature>
<feature type="binding site" evidence="1">
    <location>
        <position position="214"/>
    </location>
    <ligand>
        <name>substrate</name>
    </ligand>
</feature>
<feature type="binding site" evidence="1">
    <location>
        <position position="302"/>
    </location>
    <ligand>
        <name>Zn(2+)</name>
        <dbReference type="ChEBI" id="CHEBI:29105"/>
    </ligand>
</feature>
<feature type="binding site" evidence="1">
    <location>
        <position position="304"/>
    </location>
    <ligand>
        <name>Zn(2+)</name>
        <dbReference type="ChEBI" id="CHEBI:29105"/>
    </ligand>
</feature>
<feature type="binding site" evidence="1">
    <location>
        <position position="307"/>
    </location>
    <ligand>
        <name>Zn(2+)</name>
        <dbReference type="ChEBI" id="CHEBI:29105"/>
    </ligand>
</feature>
<feature type="binding site" evidence="1">
    <location>
        <position position="333"/>
    </location>
    <ligand>
        <name>Zn(2+)</name>
        <dbReference type="ChEBI" id="CHEBI:29105"/>
    </ligand>
</feature>
<accession>Q5P720</accession>
<proteinExistence type="inferred from homology"/>
<evidence type="ECO:0000255" key="1">
    <source>
        <dbReference type="HAMAP-Rule" id="MF_00168"/>
    </source>
</evidence>
<reference key="1">
    <citation type="journal article" date="2005" name="Arch. Microbiol.">
        <title>The genome sequence of an anaerobic aromatic-degrading denitrifying bacterium, strain EbN1.</title>
        <authorList>
            <person name="Rabus R."/>
            <person name="Kube M."/>
            <person name="Heider J."/>
            <person name="Beck A."/>
            <person name="Heitmann K."/>
            <person name="Widdel F."/>
            <person name="Reinhardt R."/>
        </authorList>
    </citation>
    <scope>NUCLEOTIDE SEQUENCE [LARGE SCALE GENOMIC DNA]</scope>
    <source>
        <strain>DSM 19018 / LMG 30748 / EbN1</strain>
    </source>
</reference>
<gene>
    <name evidence="1" type="primary">tgt</name>
    <name type="ordered locus">AZOSEA07680</name>
    <name type="ORF">ebA1415</name>
</gene>
<organism>
    <name type="scientific">Aromatoleum aromaticum (strain DSM 19018 / LMG 30748 / EbN1)</name>
    <name type="common">Azoarcus sp. (strain EbN1)</name>
    <dbReference type="NCBI Taxonomy" id="76114"/>
    <lineage>
        <taxon>Bacteria</taxon>
        <taxon>Pseudomonadati</taxon>
        <taxon>Pseudomonadota</taxon>
        <taxon>Betaproteobacteria</taxon>
        <taxon>Rhodocyclales</taxon>
        <taxon>Rhodocyclaceae</taxon>
        <taxon>Aromatoleum</taxon>
    </lineage>
</organism>